<comment type="function">
    <text evidence="6 7 9">Protein kinase that regulates many aspects of mycobacterial physiology. Is a key component of a signal transduction pathway that regulates cell growth, cell shape and cell division via phosphorylation of target proteins such as FtsZ and MurD. Shows a strong preference for Thr versus Ser as the phosphoacceptor.</text>
</comment>
<comment type="catalytic activity">
    <reaction evidence="6 7 9">
        <text>L-seryl-[protein] + ATP = O-phospho-L-seryl-[protein] + ADP + H(+)</text>
        <dbReference type="Rhea" id="RHEA:17989"/>
        <dbReference type="Rhea" id="RHEA-COMP:9863"/>
        <dbReference type="Rhea" id="RHEA-COMP:11604"/>
        <dbReference type="ChEBI" id="CHEBI:15378"/>
        <dbReference type="ChEBI" id="CHEBI:29999"/>
        <dbReference type="ChEBI" id="CHEBI:30616"/>
        <dbReference type="ChEBI" id="CHEBI:83421"/>
        <dbReference type="ChEBI" id="CHEBI:456216"/>
        <dbReference type="EC" id="2.7.11.1"/>
    </reaction>
</comment>
<comment type="catalytic activity">
    <reaction evidence="6 7 9">
        <text>L-threonyl-[protein] + ATP = O-phospho-L-threonyl-[protein] + ADP + H(+)</text>
        <dbReference type="Rhea" id="RHEA:46608"/>
        <dbReference type="Rhea" id="RHEA-COMP:11060"/>
        <dbReference type="Rhea" id="RHEA-COMP:11605"/>
        <dbReference type="ChEBI" id="CHEBI:15378"/>
        <dbReference type="ChEBI" id="CHEBI:30013"/>
        <dbReference type="ChEBI" id="CHEBI:30616"/>
        <dbReference type="ChEBI" id="CHEBI:61977"/>
        <dbReference type="ChEBI" id="CHEBI:456216"/>
        <dbReference type="EC" id="2.7.11.1"/>
    </reaction>
</comment>
<comment type="activity regulation">
    <text evidence="6">Activated by magnesium or manganese. Inhibited by vanadate.</text>
</comment>
<comment type="subunit">
    <text evidence="7 9">Interacts with FtsZ and MurD.</text>
</comment>
<comment type="subcellular location">
    <subcellularLocation>
        <location evidence="1">Cell membrane</location>
        <topology evidence="1">Single-pass membrane protein</topology>
    </subcellularLocation>
</comment>
<comment type="domain">
    <text evidence="8">The kinase domain and the juxtamembrane region constitute the catalytic core of PknA. Interaction between core and C-terminal domains is crucial for activity.</text>
</comment>
<comment type="PTM">
    <text>Autophosphorylated.</text>
</comment>
<comment type="similarity">
    <text evidence="3">Belongs to the protein kinase superfamily. Ser/Thr protein kinase family.</text>
</comment>
<dbReference type="EC" id="2.7.11.1"/>
<dbReference type="EMBL" id="CP000611">
    <property type="protein sequence ID" value="ABQ71735.1"/>
    <property type="molecule type" value="Genomic_DNA"/>
</dbReference>
<dbReference type="RefSeq" id="WP_003400358.1">
    <property type="nucleotide sequence ID" value="NZ_CP016972.1"/>
</dbReference>
<dbReference type="SMR" id="A5TY85"/>
<dbReference type="GeneID" id="45423974"/>
<dbReference type="KEGG" id="mra:MRA_0017"/>
<dbReference type="eggNOG" id="COG0515">
    <property type="taxonomic scope" value="Bacteria"/>
</dbReference>
<dbReference type="HOGENOM" id="CLU_000288_63_44_11"/>
<dbReference type="Proteomes" id="UP000001988">
    <property type="component" value="Chromosome"/>
</dbReference>
<dbReference type="GO" id="GO:0005886">
    <property type="term" value="C:plasma membrane"/>
    <property type="evidence" value="ECO:0007669"/>
    <property type="project" value="UniProtKB-SubCell"/>
</dbReference>
<dbReference type="GO" id="GO:0005524">
    <property type="term" value="F:ATP binding"/>
    <property type="evidence" value="ECO:0007669"/>
    <property type="project" value="UniProtKB-KW"/>
</dbReference>
<dbReference type="GO" id="GO:0106310">
    <property type="term" value="F:protein serine kinase activity"/>
    <property type="evidence" value="ECO:0007669"/>
    <property type="project" value="RHEA"/>
</dbReference>
<dbReference type="GO" id="GO:0004674">
    <property type="term" value="F:protein serine/threonine kinase activity"/>
    <property type="evidence" value="ECO:0007669"/>
    <property type="project" value="UniProtKB-KW"/>
</dbReference>
<dbReference type="GO" id="GO:0080090">
    <property type="term" value="P:regulation of primary metabolic process"/>
    <property type="evidence" value="ECO:0007669"/>
    <property type="project" value="UniProtKB-ARBA"/>
</dbReference>
<dbReference type="CDD" id="cd14014">
    <property type="entry name" value="STKc_PknB_like"/>
    <property type="match status" value="1"/>
</dbReference>
<dbReference type="FunFam" id="1.10.510.10:FF:000021">
    <property type="entry name" value="Serine/threonine protein kinase"/>
    <property type="match status" value="1"/>
</dbReference>
<dbReference type="FunFam" id="3.30.200.20:FF:000035">
    <property type="entry name" value="Serine/threonine protein kinase Stk1"/>
    <property type="match status" value="1"/>
</dbReference>
<dbReference type="Gene3D" id="3.30.200.20">
    <property type="entry name" value="Phosphorylase Kinase, domain 1"/>
    <property type="match status" value="1"/>
</dbReference>
<dbReference type="Gene3D" id="1.10.510.10">
    <property type="entry name" value="Transferase(Phosphotransferase) domain 1"/>
    <property type="match status" value="1"/>
</dbReference>
<dbReference type="InterPro" id="IPR011009">
    <property type="entry name" value="Kinase-like_dom_sf"/>
</dbReference>
<dbReference type="InterPro" id="IPR000719">
    <property type="entry name" value="Prot_kinase_dom"/>
</dbReference>
<dbReference type="InterPro" id="IPR008271">
    <property type="entry name" value="Ser/Thr_kinase_AS"/>
</dbReference>
<dbReference type="PANTHER" id="PTHR43289">
    <property type="entry name" value="MITOGEN-ACTIVATED PROTEIN KINASE KINASE KINASE 20-RELATED"/>
    <property type="match status" value="1"/>
</dbReference>
<dbReference type="PANTHER" id="PTHR43289:SF6">
    <property type="entry name" value="SERINE_THREONINE-PROTEIN KINASE NEKL-3"/>
    <property type="match status" value="1"/>
</dbReference>
<dbReference type="Pfam" id="PF00069">
    <property type="entry name" value="Pkinase"/>
    <property type="match status" value="1"/>
</dbReference>
<dbReference type="SMART" id="SM00220">
    <property type="entry name" value="S_TKc"/>
    <property type="match status" value="1"/>
</dbReference>
<dbReference type="SUPFAM" id="SSF56112">
    <property type="entry name" value="Protein kinase-like (PK-like)"/>
    <property type="match status" value="1"/>
</dbReference>
<dbReference type="PROSITE" id="PS50011">
    <property type="entry name" value="PROTEIN_KINASE_DOM"/>
    <property type="match status" value="1"/>
</dbReference>
<dbReference type="PROSITE" id="PS00108">
    <property type="entry name" value="PROTEIN_KINASE_ST"/>
    <property type="match status" value="1"/>
</dbReference>
<gene>
    <name type="primary">pknA</name>
    <name type="ordered locus">MRA_0017</name>
</gene>
<name>PKNA_MYCTA</name>
<proteinExistence type="evidence at protein level"/>
<organism>
    <name type="scientific">Mycobacterium tuberculosis (strain ATCC 25177 / H37Ra)</name>
    <dbReference type="NCBI Taxonomy" id="419947"/>
    <lineage>
        <taxon>Bacteria</taxon>
        <taxon>Bacillati</taxon>
        <taxon>Actinomycetota</taxon>
        <taxon>Actinomycetes</taxon>
        <taxon>Mycobacteriales</taxon>
        <taxon>Mycobacteriaceae</taxon>
        <taxon>Mycobacterium</taxon>
        <taxon>Mycobacterium tuberculosis complex</taxon>
    </lineage>
</organism>
<sequence>MSPRVGVTLSGRYRLQRLIATGGMGQVWEAVDNRLGRRVAVKVLKSEFSSDPEFIERFRAEARTTAMLNHPGIASVHDYGESQMNGEGRTAYLVMELVNGEPLNSVLKRTGRLSLRHALDMLEQTGRALQIAHAAGLVHRDVKPGNILITPTGQVKITDFGIAKAVDAAPVTQTGMVMGTAQYIAPEQALGHDASPASDVYSLGVVGYEAVSGKRPFAGDGALTVAMKHIKEPPPPLPPDLPPNVRELIEITLVKNPAMRYRSGGPFADAVAAVRAGRRPPRPSQTPPPGRAAPAAIPSGTTARVAANSAGRTAASRRSRPATGGHRPPRRTFSSGQRALLWAAGVLGALAIIIAVLLVIKAPGDNSPQQAPTPTVTTTGNPPASNTGGTDASPRLNWTERGETRHSGLQSWVVPPTPHSRASLARYEIAQ</sequence>
<accession>A5TY85</accession>
<feature type="chain" id="PRO_0000419742" description="Serine/threonine-protein kinase PknA">
    <location>
        <begin position="1"/>
        <end position="431"/>
    </location>
</feature>
<feature type="topological domain" description="Cytoplasmic" evidence="2">
    <location>
        <begin position="1"/>
        <end position="339"/>
    </location>
</feature>
<feature type="transmembrane region" description="Helical" evidence="2">
    <location>
        <begin position="340"/>
        <end position="360"/>
    </location>
</feature>
<feature type="topological domain" description="Extracellular" evidence="2">
    <location>
        <begin position="361"/>
        <end position="431"/>
    </location>
</feature>
<feature type="domain" description="Protein kinase" evidence="3">
    <location>
        <begin position="13"/>
        <end position="272"/>
    </location>
</feature>
<feature type="region of interest" description="Disordered" evidence="5">
    <location>
        <begin position="276"/>
        <end position="333"/>
    </location>
</feature>
<feature type="region of interest" description="Disordered" evidence="5">
    <location>
        <begin position="366"/>
        <end position="418"/>
    </location>
</feature>
<feature type="compositionally biased region" description="Pro residues" evidence="5">
    <location>
        <begin position="282"/>
        <end position="291"/>
    </location>
</feature>
<feature type="compositionally biased region" description="Low complexity" evidence="5">
    <location>
        <begin position="292"/>
        <end position="314"/>
    </location>
</feature>
<feature type="compositionally biased region" description="Low complexity" evidence="5">
    <location>
        <begin position="368"/>
        <end position="384"/>
    </location>
</feature>
<feature type="active site" description="Proton acceptor" evidence="3 4">
    <location>
        <position position="141"/>
    </location>
</feature>
<feature type="binding site" evidence="3">
    <location>
        <begin position="19"/>
        <end position="27"/>
    </location>
    <ligand>
        <name>ATP</name>
        <dbReference type="ChEBI" id="CHEBI:30616"/>
    </ligand>
</feature>
<feature type="binding site" evidence="3">
    <location>
        <position position="42"/>
    </location>
    <ligand>
        <name>ATP</name>
        <dbReference type="ChEBI" id="CHEBI:30616"/>
    </ligand>
</feature>
<feature type="mutagenesis site" description="Lack of autophosphorylation." evidence="6 9">
    <original>K</original>
    <variation>M</variation>
    <location>
        <position position="42"/>
    </location>
</feature>
<feature type="mutagenesis site" description="Strong decrease in autophosphorylation." evidence="8">
    <original>T</original>
    <variation>A</variation>
    <location>
        <position position="172"/>
    </location>
</feature>
<feature type="mutagenesis site" description="Decrease in autophosphorylation." evidence="8">
    <original>T</original>
    <variation>A</variation>
    <location>
        <position position="174"/>
    </location>
</feature>
<keyword id="KW-0067">ATP-binding</keyword>
<keyword id="KW-1003">Cell membrane</keyword>
<keyword id="KW-0418">Kinase</keyword>
<keyword id="KW-0472">Membrane</keyword>
<keyword id="KW-0547">Nucleotide-binding</keyword>
<keyword id="KW-0597">Phosphoprotein</keyword>
<keyword id="KW-1185">Reference proteome</keyword>
<keyword id="KW-0723">Serine/threonine-protein kinase</keyword>
<keyword id="KW-0808">Transferase</keyword>
<keyword id="KW-0812">Transmembrane</keyword>
<keyword id="KW-1133">Transmembrane helix</keyword>
<evidence type="ECO:0000250" key="1"/>
<evidence type="ECO:0000255" key="2"/>
<evidence type="ECO:0000255" key="3">
    <source>
        <dbReference type="PROSITE-ProRule" id="PRU00159"/>
    </source>
</evidence>
<evidence type="ECO:0000255" key="4">
    <source>
        <dbReference type="PROSITE-ProRule" id="PRU10027"/>
    </source>
</evidence>
<evidence type="ECO:0000256" key="5">
    <source>
        <dbReference type="SAM" id="MobiDB-lite"/>
    </source>
</evidence>
<evidence type="ECO:0000269" key="6">
    <source>
    </source>
</evidence>
<evidence type="ECO:0000269" key="7">
    <source>
    </source>
</evidence>
<evidence type="ECO:0000269" key="8">
    <source>
    </source>
</evidence>
<evidence type="ECO:0000269" key="9">
    <source>
    </source>
</evidence>
<reference key="1">
    <citation type="journal article" date="2008" name="PLoS ONE">
        <title>Genetic basis of virulence attenuation revealed by comparative genomic analysis of Mycobacterium tuberculosis strain H37Ra versus H37Rv.</title>
        <authorList>
            <person name="Zheng H."/>
            <person name="Lu L."/>
            <person name="Wang B."/>
            <person name="Pu S."/>
            <person name="Zhang X."/>
            <person name="Zhu G."/>
            <person name="Shi W."/>
            <person name="Zhang L."/>
            <person name="Wang H."/>
            <person name="Wang S."/>
            <person name="Zhao G."/>
            <person name="Zhang Y."/>
        </authorList>
    </citation>
    <scope>NUCLEOTIDE SEQUENCE [LARGE SCALE GENOMIC DNA]</scope>
    <source>
        <strain>ATCC 25177 / H37Ra</strain>
    </source>
</reference>
<reference key="2">
    <citation type="journal article" date="2002" name="Eur. J. Biochem.">
        <title>Evidence that a eukaryotic-type serine/threonine protein kinase from Mycobacterium tuberculosis regulates morphological changes associated with cell division.</title>
        <authorList>
            <person name="Chaba R."/>
            <person name="Raje M."/>
            <person name="Chakraborti P.K."/>
        </authorList>
    </citation>
    <scope>FUNCTION</scope>
    <scope>CATALYTIC ACTIVITY</scope>
    <scope>ACTIVITY REGULATION</scope>
    <scope>AUTOPHOSPHORYLATION</scope>
    <scope>MUTAGENESIS OF LYS-42</scope>
    <source>
        <strain>ATCC 25177 / H37Ra</strain>
    </source>
</reference>
<reference key="3">
    <citation type="journal article" date="2006" name="J. Biol. Chem.">
        <title>GTPase activity of mycobacterial FtsZ is impaired due to its transphosphorylation by the eukaryotic-type Ser/Thr kinase, PknA.</title>
        <authorList>
            <person name="Thakur M."/>
            <person name="Chakraborti P.K."/>
        </authorList>
    </citation>
    <scope>FUNCTION</scope>
    <scope>CATALYTIC ACTIVITY</scope>
    <scope>INTERACTION WITH FTSZ</scope>
    <source>
        <strain>ATCC 25177 / H37Ra</strain>
    </source>
</reference>
<reference key="4">
    <citation type="journal article" date="2008" name="Biochem. J.">
        <title>Ability of PknA, a mycobacterial eukaryotic-type serine/threonine kinase, to transphosphorylate MurD, a ligase involved in the process of peptidoglycan biosynthesis.</title>
        <authorList>
            <person name="Thakur M."/>
            <person name="Chakraborti P.K."/>
        </authorList>
    </citation>
    <scope>FUNCTION</scope>
    <scope>CATALYTIC ACTIVITY</scope>
    <scope>INTERACTION WITH MURD</scope>
    <scope>AUTOPHOSPHORYLATION</scope>
    <scope>MUTAGENESIS OF LYS-42</scope>
    <source>
        <strain>ATCC 25177 / H37Ra</strain>
    </source>
</reference>
<reference key="5">
    <citation type="journal article" date="2008" name="J. Biol. Chem.">
        <title>Interdomain interaction reconstitutes the functionality of PknA, a eukaryotic type Ser/Thr kinase from Mycobacterium tuberculosis.</title>
        <authorList>
            <person name="Thakur M."/>
            <person name="Chaba R."/>
            <person name="Mondal A.K."/>
            <person name="Chakraborti P.K."/>
        </authorList>
    </citation>
    <scope>AUTOPHOSPHORYLATION</scope>
    <scope>DOMAIN</scope>
    <scope>MUTAGENESIS OF THR-172 AND THR-174</scope>
    <source>
        <strain>ATCC 25177 / H37Ra</strain>
    </source>
</reference>
<protein>
    <recommendedName>
        <fullName>Serine/threonine-protein kinase PknA</fullName>
        <ecNumber>2.7.11.1</ecNumber>
    </recommendedName>
</protein>